<evidence type="ECO:0000250" key="1">
    <source>
        <dbReference type="UniProtKB" id="P0ADA1"/>
    </source>
</evidence>
<evidence type="ECO:0000255" key="2">
    <source>
        <dbReference type="PROSITE-ProRule" id="PRU00498"/>
    </source>
</evidence>
<evidence type="ECO:0000269" key="3">
    <source>
    </source>
</evidence>
<evidence type="ECO:0000303" key="4">
    <source>
    </source>
</evidence>
<evidence type="ECO:0000305" key="5"/>
<evidence type="ECO:0000312" key="6">
    <source>
        <dbReference type="EMBL" id="ONM59167.1"/>
    </source>
</evidence>
<evidence type="ECO:0000312" key="7">
    <source>
        <dbReference type="EMBL" id="PWZ15334.1"/>
    </source>
</evidence>
<protein>
    <recommendedName>
        <fullName evidence="5">GDSL esterase/lipase ACHE</fullName>
        <ecNumber evidence="3">3.1.1.-</ecNumber>
    </recommendedName>
    <alternativeName>
        <fullName evidence="4">Acetylcholinesterase</fullName>
        <shortName evidence="4">AChE</shortName>
    </alternativeName>
</protein>
<reference key="1">
    <citation type="journal article" date="2005" name="Plant Physiol.">
        <title>Molecular characterization of maize acetylcholinesterase: a novel enzyme family in the plant kingdom.</title>
        <authorList>
            <person name="Sagane Y."/>
            <person name="Nakagawa T."/>
            <person name="Yamamoto K."/>
            <person name="Michikawa S."/>
            <person name="Oguri S."/>
            <person name="Momonoki Y.S."/>
        </authorList>
    </citation>
    <scope>NUCLEOTIDE SEQUENCE [MRNA]</scope>
    <scope>PROTEIN SEQUENCE OF 32-51</scope>
    <scope>FUNCTION</scope>
    <scope>CATALYTIC ACTIVITY</scope>
    <scope>BIOPHYSICOCHEMICAL PROPERTIES</scope>
</reference>
<reference key="2">
    <citation type="journal article" date="2009" name="Science">
        <title>The B73 maize genome: complexity, diversity, and dynamics.</title>
        <authorList>
            <person name="Schnable P.S."/>
            <person name="Ware D."/>
            <person name="Fulton R.S."/>
            <person name="Stein J.C."/>
            <person name="Wei F."/>
            <person name="Pasternak S."/>
            <person name="Liang C."/>
            <person name="Zhang J."/>
            <person name="Fulton L."/>
            <person name="Graves T.A."/>
            <person name="Minx P."/>
            <person name="Reily A.D."/>
            <person name="Courtney L."/>
            <person name="Kruchowski S.S."/>
            <person name="Tomlinson C."/>
            <person name="Strong C."/>
            <person name="Delehaunty K."/>
            <person name="Fronick C."/>
            <person name="Courtney B."/>
            <person name="Rock S.M."/>
            <person name="Belter E."/>
            <person name="Du F."/>
            <person name="Kim K."/>
            <person name="Abbott R.M."/>
            <person name="Cotton M."/>
            <person name="Levy A."/>
            <person name="Marchetto P."/>
            <person name="Ochoa K."/>
            <person name="Jackson S.M."/>
            <person name="Gillam B."/>
            <person name="Chen W."/>
            <person name="Yan L."/>
            <person name="Higginbotham J."/>
            <person name="Cardenas M."/>
            <person name="Waligorski J."/>
            <person name="Applebaum E."/>
            <person name="Phelps L."/>
            <person name="Falcone J."/>
            <person name="Kanchi K."/>
            <person name="Thane T."/>
            <person name="Scimone A."/>
            <person name="Thane N."/>
            <person name="Henke J."/>
            <person name="Wang T."/>
            <person name="Ruppert J."/>
            <person name="Shah N."/>
            <person name="Rotter K."/>
            <person name="Hodges J."/>
            <person name="Ingenthron E."/>
            <person name="Cordes M."/>
            <person name="Kohlberg S."/>
            <person name="Sgro J."/>
            <person name="Delgado B."/>
            <person name="Mead K."/>
            <person name="Chinwalla A."/>
            <person name="Leonard S."/>
            <person name="Crouse K."/>
            <person name="Collura K."/>
            <person name="Kudrna D."/>
            <person name="Currie J."/>
            <person name="He R."/>
            <person name="Angelova A."/>
            <person name="Rajasekar S."/>
            <person name="Mueller T."/>
            <person name="Lomeli R."/>
            <person name="Scara G."/>
            <person name="Ko A."/>
            <person name="Delaney K."/>
            <person name="Wissotski M."/>
            <person name="Lopez G."/>
            <person name="Campos D."/>
            <person name="Braidotti M."/>
            <person name="Ashley E."/>
            <person name="Golser W."/>
            <person name="Kim H."/>
            <person name="Lee S."/>
            <person name="Lin J."/>
            <person name="Dujmic Z."/>
            <person name="Kim W."/>
            <person name="Talag J."/>
            <person name="Zuccolo A."/>
            <person name="Fan C."/>
            <person name="Sebastian A."/>
            <person name="Kramer M."/>
            <person name="Spiegel L."/>
            <person name="Nascimento L."/>
            <person name="Zutavern T."/>
            <person name="Miller B."/>
            <person name="Ambroise C."/>
            <person name="Muller S."/>
            <person name="Spooner W."/>
            <person name="Narechania A."/>
            <person name="Ren L."/>
            <person name="Wei S."/>
            <person name="Kumari S."/>
            <person name="Faga B."/>
            <person name="Levy M.J."/>
            <person name="McMahan L."/>
            <person name="Van Buren P."/>
            <person name="Vaughn M.W."/>
            <person name="Ying K."/>
            <person name="Yeh C.-T."/>
            <person name="Emrich S.J."/>
            <person name="Jia Y."/>
            <person name="Kalyanaraman A."/>
            <person name="Hsia A.-P."/>
            <person name="Barbazuk W.B."/>
            <person name="Baucom R.S."/>
            <person name="Brutnell T.P."/>
            <person name="Carpita N.C."/>
            <person name="Chaparro C."/>
            <person name="Chia J.-M."/>
            <person name="Deragon J.-M."/>
            <person name="Estill J.C."/>
            <person name="Fu Y."/>
            <person name="Jeddeloh J.A."/>
            <person name="Han Y."/>
            <person name="Lee H."/>
            <person name="Li P."/>
            <person name="Lisch D.R."/>
            <person name="Liu S."/>
            <person name="Liu Z."/>
            <person name="Nagel D.H."/>
            <person name="McCann M.C."/>
            <person name="SanMiguel P."/>
            <person name="Myers A.M."/>
            <person name="Nettleton D."/>
            <person name="Nguyen J."/>
            <person name="Penning B.W."/>
            <person name="Ponnala L."/>
            <person name="Schneider K.L."/>
            <person name="Schwartz D.C."/>
            <person name="Sharma A."/>
            <person name="Soderlund C."/>
            <person name="Springer N.M."/>
            <person name="Sun Q."/>
            <person name="Wang H."/>
            <person name="Waterman M."/>
            <person name="Westerman R."/>
            <person name="Wolfgruber T.K."/>
            <person name="Yang L."/>
            <person name="Yu Y."/>
            <person name="Zhang L."/>
            <person name="Zhou S."/>
            <person name="Zhu Q."/>
            <person name="Bennetzen J.L."/>
            <person name="Dawe R.K."/>
            <person name="Jiang J."/>
            <person name="Jiang N."/>
            <person name="Presting G.G."/>
            <person name="Wessler S.R."/>
            <person name="Aluru S."/>
            <person name="Martienssen R.A."/>
            <person name="Clifton S.W."/>
            <person name="McCombie W.R."/>
            <person name="Wing R.A."/>
            <person name="Wilson R.K."/>
        </authorList>
    </citation>
    <scope>NUCLEOTIDE SEQUENCE [LARGE SCALE GENOMIC DNA]</scope>
    <source>
        <strain>cv. B73</strain>
    </source>
</reference>
<reference key="3">
    <citation type="journal article" date="2018" name="Nat. Genet.">
        <title>Extensive intraspecific gene order and gene structural variations between Mo17 and other maize genomes.</title>
        <authorList>
            <person name="Sun S."/>
            <person name="Zhou Y."/>
            <person name="Chen J."/>
            <person name="Shi J."/>
            <person name="Zhao H."/>
            <person name="Zhao H."/>
            <person name="Song W."/>
            <person name="Zhang M."/>
            <person name="Cui Y."/>
            <person name="Dong X."/>
            <person name="Liu H."/>
            <person name="Ma X."/>
            <person name="Jiao Y."/>
            <person name="Wang B."/>
            <person name="Wei X."/>
            <person name="Stein J.C."/>
            <person name="Glaubitz J.C."/>
            <person name="Lu F."/>
            <person name="Yu G."/>
            <person name="Liang C."/>
            <person name="Fengler K."/>
            <person name="Li B."/>
            <person name="Rafalski A."/>
            <person name="Schnable P.S."/>
            <person name="Ware D.H."/>
            <person name="Buckler E.S."/>
            <person name="Lai J."/>
        </authorList>
    </citation>
    <scope>NUCLEOTIDE SEQUENCE [LARGE SCALE GENOMIC DNA]</scope>
    <source>
        <strain>cv. Missouri 17</strain>
        <tissue>Seedling</tissue>
    </source>
</reference>
<reference key="4">
    <citation type="journal article" date="2009" name="Plant Mol. Biol.">
        <title>Insights into corn genes derived from large-scale cDNA sequencing.</title>
        <authorList>
            <person name="Alexandrov N.N."/>
            <person name="Brover V.V."/>
            <person name="Freidin S."/>
            <person name="Troukhan M.E."/>
            <person name="Tatarinova T.V."/>
            <person name="Zhang H."/>
            <person name="Swaller T.J."/>
            <person name="Lu Y.-P."/>
            <person name="Bouck J."/>
            <person name="Flavell R.B."/>
            <person name="Feldmann K.A."/>
        </authorList>
    </citation>
    <scope>NUCLEOTIDE SEQUENCE [LARGE SCALE MRNA]</scope>
</reference>
<reference key="5">
    <citation type="journal article" date="2009" name="PLoS Genet.">
        <title>Sequencing, mapping, and analysis of 27,455 maize full-length cDNAs.</title>
        <authorList>
            <person name="Soderlund C."/>
            <person name="Descour A."/>
            <person name="Kudrna D."/>
            <person name="Bomhoff M."/>
            <person name="Boyd L."/>
            <person name="Currie J."/>
            <person name="Angelova A."/>
            <person name="Collura K."/>
            <person name="Wissotski M."/>
            <person name="Ashley E."/>
            <person name="Morrow D."/>
            <person name="Fernandes J."/>
            <person name="Walbot V."/>
            <person name="Yu Y."/>
        </authorList>
    </citation>
    <scope>NUCLEOTIDE SEQUENCE [LARGE SCALE MRNA]</scope>
    <source>
        <strain>cv. B73</strain>
    </source>
</reference>
<gene>
    <name evidence="4" type="primary">ACHE</name>
    <name evidence="6" type="ORF">ZEAMMB73_Zm00001d021961</name>
    <name evidence="7" type="ORF">Zm00014a_018493</name>
</gene>
<proteinExistence type="evidence at protein level"/>
<dbReference type="EC" id="3.1.1.-" evidence="3"/>
<dbReference type="EMBL" id="AB093208">
    <property type="protein sequence ID" value="BAD89850.1"/>
    <property type="molecule type" value="mRNA"/>
</dbReference>
<dbReference type="EMBL" id="CM007650">
    <property type="protein sequence ID" value="ONM59167.1"/>
    <property type="molecule type" value="Genomic_DNA"/>
</dbReference>
<dbReference type="EMBL" id="NCVQ01000008">
    <property type="protein sequence ID" value="PWZ15334.1"/>
    <property type="molecule type" value="Genomic_DNA"/>
</dbReference>
<dbReference type="EMBL" id="EU964721">
    <property type="protein sequence ID" value="ACG36839.1"/>
    <property type="molecule type" value="mRNA"/>
</dbReference>
<dbReference type="EMBL" id="BT042425">
    <property type="protein sequence ID" value="ACF87430.1"/>
    <property type="molecule type" value="mRNA"/>
</dbReference>
<dbReference type="RefSeq" id="NP_001105800.2">
    <property type="nucleotide sequence ID" value="NM_001112330.2"/>
</dbReference>
<dbReference type="SMR" id="B4FZ87"/>
<dbReference type="FunCoup" id="B4FZ87">
    <property type="interactions" value="93"/>
</dbReference>
<dbReference type="IntAct" id="B4FZ87">
    <property type="interactions" value="1"/>
</dbReference>
<dbReference type="STRING" id="4577.B4FZ87"/>
<dbReference type="GlyCosmos" id="B4FZ87">
    <property type="glycosylation" value="5 sites, No reported glycans"/>
</dbReference>
<dbReference type="EnsemblPlants" id="Zm00001eb325910_T001">
    <property type="protein sequence ID" value="Zm00001eb325910_P001"/>
    <property type="gene ID" value="Zm00001eb325910"/>
</dbReference>
<dbReference type="GeneID" id="606473"/>
<dbReference type="Gramene" id="Zm00001eb325910_T001">
    <property type="protein sequence ID" value="Zm00001eb325910_P001"/>
    <property type="gene ID" value="Zm00001eb325910"/>
</dbReference>
<dbReference type="KEGG" id="zma:606473"/>
<dbReference type="InParanoid" id="B4FZ87"/>
<dbReference type="OMA" id="RQACHSR"/>
<dbReference type="OrthoDB" id="1600564at2759"/>
<dbReference type="Proteomes" id="UP000007305">
    <property type="component" value="Chromosome 7"/>
</dbReference>
<dbReference type="Proteomes" id="UP000251960">
    <property type="component" value="Chromosome 7"/>
</dbReference>
<dbReference type="ExpressionAtlas" id="B4FZ87">
    <property type="expression patterns" value="baseline and differential"/>
</dbReference>
<dbReference type="GO" id="GO:0005576">
    <property type="term" value="C:extracellular region"/>
    <property type="evidence" value="ECO:0007669"/>
    <property type="project" value="UniProtKB-SubCell"/>
</dbReference>
<dbReference type="GO" id="GO:0052689">
    <property type="term" value="F:carboxylic ester hydrolase activity"/>
    <property type="evidence" value="ECO:0007669"/>
    <property type="project" value="UniProtKB-KW"/>
</dbReference>
<dbReference type="GO" id="GO:0006581">
    <property type="term" value="P:acetylcholine catabolic process"/>
    <property type="evidence" value="ECO:0000314"/>
    <property type="project" value="UniProtKB"/>
</dbReference>
<dbReference type="GO" id="GO:0016042">
    <property type="term" value="P:lipid catabolic process"/>
    <property type="evidence" value="ECO:0007669"/>
    <property type="project" value="UniProtKB-KW"/>
</dbReference>
<dbReference type="CDD" id="cd01837">
    <property type="entry name" value="SGNH_plant_lipase_like"/>
    <property type="match status" value="1"/>
</dbReference>
<dbReference type="Gene3D" id="3.40.50.1110">
    <property type="entry name" value="SGNH hydrolase"/>
    <property type="match status" value="1"/>
</dbReference>
<dbReference type="InterPro" id="IPR036915">
    <property type="entry name" value="Cyclin-like_sf"/>
</dbReference>
<dbReference type="InterPro" id="IPR001087">
    <property type="entry name" value="GDSL"/>
</dbReference>
<dbReference type="InterPro" id="IPR036514">
    <property type="entry name" value="SGNH_hydro_sf"/>
</dbReference>
<dbReference type="InterPro" id="IPR035669">
    <property type="entry name" value="SGNH_plant_lipase-like"/>
</dbReference>
<dbReference type="PANTHER" id="PTHR22835:SF588">
    <property type="entry name" value="ALPHA-L-FUCOSIDASE 3"/>
    <property type="match status" value="1"/>
</dbReference>
<dbReference type="PANTHER" id="PTHR22835">
    <property type="entry name" value="ZINC FINGER FYVE DOMAIN CONTAINING PROTEIN"/>
    <property type="match status" value="1"/>
</dbReference>
<dbReference type="Pfam" id="PF00657">
    <property type="entry name" value="Lipase_GDSL"/>
    <property type="match status" value="1"/>
</dbReference>
<dbReference type="SUPFAM" id="SSF47954">
    <property type="entry name" value="Cyclin-like"/>
    <property type="match status" value="1"/>
</dbReference>
<dbReference type="SUPFAM" id="SSF52266">
    <property type="entry name" value="SGNH hydrolase"/>
    <property type="match status" value="1"/>
</dbReference>
<name>ACHE_MAIZE</name>
<keyword id="KW-0903">Direct protein sequencing</keyword>
<keyword id="KW-0325">Glycoprotein</keyword>
<keyword id="KW-0378">Hydrolase</keyword>
<keyword id="KW-0442">Lipid degradation</keyword>
<keyword id="KW-0443">Lipid metabolism</keyword>
<keyword id="KW-1185">Reference proteome</keyword>
<keyword id="KW-0964">Secreted</keyword>
<keyword id="KW-0719">Serine esterase</keyword>
<keyword id="KW-0732">Signal</keyword>
<feature type="signal peptide" evidence="3">
    <location>
        <begin position="1"/>
        <end position="31"/>
    </location>
</feature>
<feature type="chain" id="PRO_5011203678" description="GDSL esterase/lipase ACHE">
    <location>
        <begin position="32"/>
        <end position="396"/>
    </location>
</feature>
<feature type="active site" description="Nucleophile" evidence="1">
    <location>
        <position position="49"/>
    </location>
</feature>
<feature type="active site" evidence="1">
    <location>
        <position position="359"/>
    </location>
</feature>
<feature type="active site" evidence="1">
    <location>
        <position position="362"/>
    </location>
</feature>
<feature type="glycosylation site" description="N-linked (GlcNAc...) asparagine" evidence="2">
    <location>
        <position position="108"/>
    </location>
</feature>
<feature type="glycosylation site" description="N-linked (GlcNAc...) asparagine" evidence="2">
    <location>
        <position position="126"/>
    </location>
</feature>
<feature type="glycosylation site" description="N-linked (GlcNAc...) asparagine" evidence="2">
    <location>
        <position position="151"/>
    </location>
</feature>
<feature type="glycosylation site" description="N-linked (GlcNAc...) asparagine" evidence="2">
    <location>
        <position position="196"/>
    </location>
</feature>
<feature type="glycosylation site" description="N-linked (GlcNAc...) asparagine" evidence="2">
    <location>
        <position position="339"/>
    </location>
</feature>
<feature type="sequence conflict" description="In Ref. 1; BAD89850." evidence="5" ref="1">
    <original>ALRPSD</original>
    <variation>RASG</variation>
    <location>
        <begin position="26"/>
        <end position="31"/>
    </location>
</feature>
<feature type="sequence conflict" description="In Ref. 1; BAD89850." evidence="5" ref="1">
    <original>I</original>
    <variation>T</variation>
    <location>
        <position position="250"/>
    </location>
</feature>
<feature type="sequence conflict" description="In Ref. 1; BAD89850." evidence="5" ref="1">
    <original>A</original>
    <variation>P</variation>
    <location>
        <position position="265"/>
    </location>
</feature>
<feature type="sequence conflict" description="In Ref. 1; BAD89850." evidence="5" ref="1">
    <original>N</original>
    <variation>K</variation>
    <location>
        <position position="305"/>
    </location>
</feature>
<sequence>MATAATATAGSRAAVLLLLSLALALALRPSDAGAGGDCHFPAVFNFGDSNSDTGGLSSLFGAAPPPNGRTFFGMPAGRYCDGRLVIDFIAESLGLTHLSAYLNSIGSNFTQGANFATAGSSIRRQNTSLFLSGFSPISLDVQFWEFEQFINRSQLVYNNKGGIYREILPRAEYFSQALYTFDIGQNDITSSYFVNNTTEEVEAIIPDLMERLTSIIQSVYSRGGRYFWIHNTGPLGCLPYALLHRPDLAIPADGTGCSVTYNKVAQLFNLRLKETVASLRKTHPDAAFTYVDVYTAKYKLISQANKLGFDDPLLTCCGYGGGRYNLDLSVGCGGKKQVNGTSVVVGKSCENPSKRVSWDGVHFTEAANKFVFDQIVAGALSDPPVALRQACHSRGQ</sequence>
<comment type="function">
    <text evidence="3">Esterase that can hydrolyze acetylthiocholine and propionylthiocholine in vitro (PubMed:15980188). Substrate preference is propionylthiocholine &gt; acetylthiocholine (PubMed:15980188). Possesses extremely low activity against butyrylthiocholine (PubMed:15980188).</text>
</comment>
<comment type="biophysicochemical properties">
    <kinetics>
        <KM evidence="3">4.7 mM for acetylthiocholine</KM>
        <KM evidence="3">3.1 mM for propionylthiocholine</KM>
        <Vmax evidence="3">1.7 umol/min/mg enzyme with acetylthiocholine as substrate</Vmax>
        <Vmax evidence="3">1.7 umol/min/mg enzyme with propionylthiocholine as substrate</Vmax>
    </kinetics>
</comment>
<comment type="subcellular location">
    <subcellularLocation>
        <location evidence="5">Secreted</location>
    </subcellularLocation>
</comment>
<comment type="similarity">
    <text evidence="5">Belongs to the 'GDSL' lipolytic enzyme family.</text>
</comment>
<organism>
    <name type="scientific">Zea mays</name>
    <name type="common">Maize</name>
    <dbReference type="NCBI Taxonomy" id="4577"/>
    <lineage>
        <taxon>Eukaryota</taxon>
        <taxon>Viridiplantae</taxon>
        <taxon>Streptophyta</taxon>
        <taxon>Embryophyta</taxon>
        <taxon>Tracheophyta</taxon>
        <taxon>Spermatophyta</taxon>
        <taxon>Magnoliopsida</taxon>
        <taxon>Liliopsida</taxon>
        <taxon>Poales</taxon>
        <taxon>Poaceae</taxon>
        <taxon>PACMAD clade</taxon>
        <taxon>Panicoideae</taxon>
        <taxon>Andropogonodae</taxon>
        <taxon>Andropogoneae</taxon>
        <taxon>Tripsacinae</taxon>
        <taxon>Zea</taxon>
    </lineage>
</organism>
<accession>B4FZ87</accession>
<accession>A0A3L6E326</accession>
<accession>Q5FC14</accession>